<protein>
    <recommendedName>
        <fullName evidence="1">Large ribosomal subunit protein uL15</fullName>
    </recommendedName>
    <alternativeName>
        <fullName evidence="3">50S ribosomal protein L15</fullName>
    </alternativeName>
</protein>
<name>RL15_BRUSU</name>
<accession>Q8G090</accession>
<accession>G0KAD5</accession>
<reference key="1">
    <citation type="journal article" date="2002" name="Proc. Natl. Acad. Sci. U.S.A.">
        <title>The Brucella suis genome reveals fundamental similarities between animal and plant pathogens and symbionts.</title>
        <authorList>
            <person name="Paulsen I.T."/>
            <person name="Seshadri R."/>
            <person name="Nelson K.E."/>
            <person name="Eisen J.A."/>
            <person name="Heidelberg J.F."/>
            <person name="Read T.D."/>
            <person name="Dodson R.J."/>
            <person name="Umayam L.A."/>
            <person name="Brinkac L.M."/>
            <person name="Beanan M.J."/>
            <person name="Daugherty S.C."/>
            <person name="DeBoy R.T."/>
            <person name="Durkin A.S."/>
            <person name="Kolonay J.F."/>
            <person name="Madupu R."/>
            <person name="Nelson W.C."/>
            <person name="Ayodeji B."/>
            <person name="Kraul M."/>
            <person name="Shetty J."/>
            <person name="Malek J.A."/>
            <person name="Van Aken S.E."/>
            <person name="Riedmuller S."/>
            <person name="Tettelin H."/>
            <person name="Gill S.R."/>
            <person name="White O."/>
            <person name="Salzberg S.L."/>
            <person name="Hoover D.L."/>
            <person name="Lindler L.E."/>
            <person name="Halling S.M."/>
            <person name="Boyle S.M."/>
            <person name="Fraser C.M."/>
        </authorList>
    </citation>
    <scope>NUCLEOTIDE SEQUENCE [LARGE SCALE GENOMIC DNA]</scope>
    <source>
        <strain>1330</strain>
    </source>
</reference>
<reference key="2">
    <citation type="journal article" date="2011" name="J. Bacteriol.">
        <title>Revised genome sequence of Brucella suis 1330.</title>
        <authorList>
            <person name="Tae H."/>
            <person name="Shallom S."/>
            <person name="Settlage R."/>
            <person name="Preston D."/>
            <person name="Adams L.G."/>
            <person name="Garner H.R."/>
        </authorList>
    </citation>
    <scope>NUCLEOTIDE SEQUENCE [LARGE SCALE GENOMIC DNA]</scope>
    <source>
        <strain>1330</strain>
    </source>
</reference>
<dbReference type="EMBL" id="AE014291">
    <property type="protein sequence ID" value="AAN30133.1"/>
    <property type="molecule type" value="Genomic_DNA"/>
</dbReference>
<dbReference type="EMBL" id="CP002997">
    <property type="protein sequence ID" value="AEM18551.1"/>
    <property type="molecule type" value="Genomic_DNA"/>
</dbReference>
<dbReference type="PIR" id="AB3349">
    <property type="entry name" value="AB3349"/>
</dbReference>
<dbReference type="RefSeq" id="WP_002964343.1">
    <property type="nucleotide sequence ID" value="NZ_KN046804.1"/>
</dbReference>
<dbReference type="SMR" id="Q8G090"/>
<dbReference type="GeneID" id="97533543"/>
<dbReference type="KEGG" id="bms:BR1214"/>
<dbReference type="KEGG" id="bsi:BS1330_I1210"/>
<dbReference type="PATRIC" id="fig|204722.21.peg.2262"/>
<dbReference type="HOGENOM" id="CLU_055188_4_0_5"/>
<dbReference type="PhylomeDB" id="Q8G090"/>
<dbReference type="Proteomes" id="UP000007104">
    <property type="component" value="Chromosome I"/>
</dbReference>
<dbReference type="GO" id="GO:0022625">
    <property type="term" value="C:cytosolic large ribosomal subunit"/>
    <property type="evidence" value="ECO:0007669"/>
    <property type="project" value="TreeGrafter"/>
</dbReference>
<dbReference type="GO" id="GO:0019843">
    <property type="term" value="F:rRNA binding"/>
    <property type="evidence" value="ECO:0007669"/>
    <property type="project" value="UniProtKB-UniRule"/>
</dbReference>
<dbReference type="GO" id="GO:0003735">
    <property type="term" value="F:structural constituent of ribosome"/>
    <property type="evidence" value="ECO:0007669"/>
    <property type="project" value="InterPro"/>
</dbReference>
<dbReference type="GO" id="GO:0006412">
    <property type="term" value="P:translation"/>
    <property type="evidence" value="ECO:0007669"/>
    <property type="project" value="UniProtKB-UniRule"/>
</dbReference>
<dbReference type="Gene3D" id="3.100.10.10">
    <property type="match status" value="1"/>
</dbReference>
<dbReference type="HAMAP" id="MF_01341">
    <property type="entry name" value="Ribosomal_uL15"/>
    <property type="match status" value="1"/>
</dbReference>
<dbReference type="InterPro" id="IPR030878">
    <property type="entry name" value="Ribosomal_uL15"/>
</dbReference>
<dbReference type="InterPro" id="IPR021131">
    <property type="entry name" value="Ribosomal_uL15/eL18"/>
</dbReference>
<dbReference type="InterPro" id="IPR036227">
    <property type="entry name" value="Ribosomal_uL15/eL18_sf"/>
</dbReference>
<dbReference type="InterPro" id="IPR005749">
    <property type="entry name" value="Ribosomal_uL15_bac-type"/>
</dbReference>
<dbReference type="InterPro" id="IPR001196">
    <property type="entry name" value="Ribosomal_uL15_CS"/>
</dbReference>
<dbReference type="NCBIfam" id="TIGR01071">
    <property type="entry name" value="rplO_bact"/>
    <property type="match status" value="1"/>
</dbReference>
<dbReference type="PANTHER" id="PTHR12934">
    <property type="entry name" value="50S RIBOSOMAL PROTEIN L15"/>
    <property type="match status" value="1"/>
</dbReference>
<dbReference type="PANTHER" id="PTHR12934:SF11">
    <property type="entry name" value="LARGE RIBOSOMAL SUBUNIT PROTEIN UL15M"/>
    <property type="match status" value="1"/>
</dbReference>
<dbReference type="Pfam" id="PF00828">
    <property type="entry name" value="Ribosomal_L27A"/>
    <property type="match status" value="1"/>
</dbReference>
<dbReference type="SUPFAM" id="SSF52080">
    <property type="entry name" value="Ribosomal proteins L15p and L18e"/>
    <property type="match status" value="1"/>
</dbReference>
<dbReference type="PROSITE" id="PS00475">
    <property type="entry name" value="RIBOSOMAL_L15"/>
    <property type="match status" value="1"/>
</dbReference>
<feature type="chain" id="PRO_0000104692" description="Large ribosomal subunit protein uL15">
    <location>
        <begin position="1"/>
        <end position="156"/>
    </location>
</feature>
<feature type="region of interest" description="Disordered" evidence="2">
    <location>
        <begin position="1"/>
        <end position="44"/>
    </location>
</feature>
<feature type="compositionally biased region" description="Basic and acidic residues" evidence="2">
    <location>
        <begin position="1"/>
        <end position="11"/>
    </location>
</feature>
<feature type="compositionally biased region" description="Gly residues" evidence="2">
    <location>
        <begin position="21"/>
        <end position="35"/>
    </location>
</feature>
<organism>
    <name type="scientific">Brucella suis biovar 1 (strain 1330)</name>
    <dbReference type="NCBI Taxonomy" id="204722"/>
    <lineage>
        <taxon>Bacteria</taxon>
        <taxon>Pseudomonadati</taxon>
        <taxon>Pseudomonadota</taxon>
        <taxon>Alphaproteobacteria</taxon>
        <taxon>Hyphomicrobiales</taxon>
        <taxon>Brucellaceae</taxon>
        <taxon>Brucella/Ochrobactrum group</taxon>
        <taxon>Brucella</taxon>
    </lineage>
</organism>
<proteinExistence type="inferred from homology"/>
<comment type="function">
    <text evidence="1">Binds to the 23S rRNA.</text>
</comment>
<comment type="subunit">
    <text evidence="1">Part of the 50S ribosomal subunit.</text>
</comment>
<comment type="similarity">
    <text evidence="1">Belongs to the universal ribosomal protein uL15 family.</text>
</comment>
<sequence length="156" mass="16245">MKLNDLRDKPGSVKARKRVGRGIGSGTGKTGGRGVKGQKSRSGVSINGFEGGQMPIYRRLPKRGFTNIFAKSFNVVSLGRIQAAIDAGKLDAKAVVNLDSLKAAGVIRRAKDGVRILSDGELKAKVAFEVAGASKAAVEKIEKAGGSIKLPEAAAE</sequence>
<evidence type="ECO:0000255" key="1">
    <source>
        <dbReference type="HAMAP-Rule" id="MF_01341"/>
    </source>
</evidence>
<evidence type="ECO:0000256" key="2">
    <source>
        <dbReference type="SAM" id="MobiDB-lite"/>
    </source>
</evidence>
<evidence type="ECO:0000305" key="3"/>
<gene>
    <name evidence="1" type="primary">rplO</name>
    <name type="ordered locus">BR1214</name>
    <name type="ordered locus">BS1330_I1210</name>
</gene>
<keyword id="KW-0687">Ribonucleoprotein</keyword>
<keyword id="KW-0689">Ribosomal protein</keyword>
<keyword id="KW-0694">RNA-binding</keyword>
<keyword id="KW-0699">rRNA-binding</keyword>